<keyword id="KW-0025">Alternative splicing</keyword>
<keyword id="KW-0597">Phosphoprotein</keyword>
<keyword id="KW-1185">Reference proteome</keyword>
<keyword id="KW-0677">Repeat</keyword>
<keyword id="KW-0833">Ubl conjugation pathway</keyword>
<keyword id="KW-0853">WD repeat</keyword>
<feature type="chain" id="PRO_0000051372" description="DDB1- and CUL4-associated factor 11">
    <location>
        <begin position="1"/>
        <end position="549"/>
    </location>
</feature>
<feature type="repeat" description="WD 1">
    <location>
        <begin position="170"/>
        <end position="210"/>
    </location>
</feature>
<feature type="repeat" description="WD 2">
    <location>
        <begin position="216"/>
        <end position="258"/>
    </location>
</feature>
<feature type="repeat" description="WD 3">
    <location>
        <begin position="263"/>
        <end position="302"/>
    </location>
</feature>
<feature type="repeat" description="WD 4">
    <location>
        <begin position="305"/>
        <end position="345"/>
    </location>
</feature>
<feature type="repeat" description="WD 5">
    <location>
        <begin position="353"/>
        <end position="392"/>
    </location>
</feature>
<feature type="repeat" description="WD 6">
    <location>
        <begin position="435"/>
        <end position="480"/>
    </location>
</feature>
<feature type="repeat" description="WD 7">
    <location>
        <begin position="481"/>
        <end position="520"/>
    </location>
</feature>
<feature type="region of interest" description="Disordered" evidence="2">
    <location>
        <begin position="1"/>
        <end position="40"/>
    </location>
</feature>
<feature type="compositionally biased region" description="Low complexity" evidence="2">
    <location>
        <begin position="1"/>
        <end position="24"/>
    </location>
</feature>
<feature type="modified residue" description="Phosphoserine" evidence="4 5">
    <location>
        <position position="73"/>
    </location>
</feature>
<feature type="modified residue" description="Phosphoserine" evidence="5">
    <location>
        <position position="75"/>
    </location>
</feature>
<feature type="splice variant" id="VSP_008425" description="In isoform 2." evidence="3">
    <location>
        <begin position="1"/>
        <end position="44"/>
    </location>
</feature>
<feature type="splice variant" id="VSP_008426" description="In isoform 2." evidence="3">
    <original>VLAYLLR</original>
    <variation>MKMWIWP</variation>
    <location>
        <begin position="45"/>
        <end position="51"/>
    </location>
</feature>
<name>DCA11_MOUSE</name>
<organism>
    <name type="scientific">Mus musculus</name>
    <name type="common">Mouse</name>
    <dbReference type="NCBI Taxonomy" id="10090"/>
    <lineage>
        <taxon>Eukaryota</taxon>
        <taxon>Metazoa</taxon>
        <taxon>Chordata</taxon>
        <taxon>Craniata</taxon>
        <taxon>Vertebrata</taxon>
        <taxon>Euteleostomi</taxon>
        <taxon>Mammalia</taxon>
        <taxon>Eutheria</taxon>
        <taxon>Euarchontoglires</taxon>
        <taxon>Glires</taxon>
        <taxon>Rodentia</taxon>
        <taxon>Myomorpha</taxon>
        <taxon>Muroidea</taxon>
        <taxon>Muridae</taxon>
        <taxon>Murinae</taxon>
        <taxon>Mus</taxon>
        <taxon>Mus</taxon>
    </lineage>
</organism>
<sequence>MGSRNSSSAGSGSLEPSEGLSRRGTGLRRSEEEEEEDEDVDLAQVLAYLLRRGQVRLVQGRGAANLQLIQALSDSEEEHDSAWDGRLGDRYNPPVDATPDTRELEYNEIKTQVGLATGRLGLRRTALQQSFPQMLHQRERGLCHRGSFSLGEQSRVMSHFLPNDLSFTDTYSQKAFCGIYSKDGQIFMSACQDQTIRLYDCRYGRFHKFKSIKARDVGWSVLDVAFTPDGNHFLYSSWSDYIHICNIYGEGDTHTALDLRPDERRFAVFSIAVSSDGREVLGGANDGCLYVFDREQNRRTLQIESHEDDVNAVAFADISSQILFSGGDDAICKVWDRRTMREDDPKPVGALAGHQDGITFIDSKGDARYLISNSKDQTIKLWDIRRFSSREGMEASRLAATQQNWDYRWQQVPKIAWKKLKLPGDSSLMTYRGHGVLHTLIRCRFSPAHSTGQQFIYSGCSTGKVVVYDLLSGHIVKKLTNHKACVRDVSWHPFEEKIVSSSWDGNLRLWQYRQAEYFQDDMPESDMNRVCSSGPTPVPCPSVAFSSPQ</sequence>
<reference key="1">
    <citation type="journal article" date="2005" name="Science">
        <title>The transcriptional landscape of the mammalian genome.</title>
        <authorList>
            <person name="Carninci P."/>
            <person name="Kasukawa T."/>
            <person name="Katayama S."/>
            <person name="Gough J."/>
            <person name="Frith M.C."/>
            <person name="Maeda N."/>
            <person name="Oyama R."/>
            <person name="Ravasi T."/>
            <person name="Lenhard B."/>
            <person name="Wells C."/>
            <person name="Kodzius R."/>
            <person name="Shimokawa K."/>
            <person name="Bajic V.B."/>
            <person name="Brenner S.E."/>
            <person name="Batalov S."/>
            <person name="Forrest A.R."/>
            <person name="Zavolan M."/>
            <person name="Davis M.J."/>
            <person name="Wilming L.G."/>
            <person name="Aidinis V."/>
            <person name="Allen J.E."/>
            <person name="Ambesi-Impiombato A."/>
            <person name="Apweiler R."/>
            <person name="Aturaliya R.N."/>
            <person name="Bailey T.L."/>
            <person name="Bansal M."/>
            <person name="Baxter L."/>
            <person name="Beisel K.W."/>
            <person name="Bersano T."/>
            <person name="Bono H."/>
            <person name="Chalk A.M."/>
            <person name="Chiu K.P."/>
            <person name="Choudhary V."/>
            <person name="Christoffels A."/>
            <person name="Clutterbuck D.R."/>
            <person name="Crowe M.L."/>
            <person name="Dalla E."/>
            <person name="Dalrymple B.P."/>
            <person name="de Bono B."/>
            <person name="Della Gatta G."/>
            <person name="di Bernardo D."/>
            <person name="Down T."/>
            <person name="Engstrom P."/>
            <person name="Fagiolini M."/>
            <person name="Faulkner G."/>
            <person name="Fletcher C.F."/>
            <person name="Fukushima T."/>
            <person name="Furuno M."/>
            <person name="Futaki S."/>
            <person name="Gariboldi M."/>
            <person name="Georgii-Hemming P."/>
            <person name="Gingeras T.R."/>
            <person name="Gojobori T."/>
            <person name="Green R.E."/>
            <person name="Gustincich S."/>
            <person name="Harbers M."/>
            <person name="Hayashi Y."/>
            <person name="Hensch T.K."/>
            <person name="Hirokawa N."/>
            <person name="Hill D."/>
            <person name="Huminiecki L."/>
            <person name="Iacono M."/>
            <person name="Ikeo K."/>
            <person name="Iwama A."/>
            <person name="Ishikawa T."/>
            <person name="Jakt M."/>
            <person name="Kanapin A."/>
            <person name="Katoh M."/>
            <person name="Kawasawa Y."/>
            <person name="Kelso J."/>
            <person name="Kitamura H."/>
            <person name="Kitano H."/>
            <person name="Kollias G."/>
            <person name="Krishnan S.P."/>
            <person name="Kruger A."/>
            <person name="Kummerfeld S.K."/>
            <person name="Kurochkin I.V."/>
            <person name="Lareau L.F."/>
            <person name="Lazarevic D."/>
            <person name="Lipovich L."/>
            <person name="Liu J."/>
            <person name="Liuni S."/>
            <person name="McWilliam S."/>
            <person name="Madan Babu M."/>
            <person name="Madera M."/>
            <person name="Marchionni L."/>
            <person name="Matsuda H."/>
            <person name="Matsuzawa S."/>
            <person name="Miki H."/>
            <person name="Mignone F."/>
            <person name="Miyake S."/>
            <person name="Morris K."/>
            <person name="Mottagui-Tabar S."/>
            <person name="Mulder N."/>
            <person name="Nakano N."/>
            <person name="Nakauchi H."/>
            <person name="Ng P."/>
            <person name="Nilsson R."/>
            <person name="Nishiguchi S."/>
            <person name="Nishikawa S."/>
            <person name="Nori F."/>
            <person name="Ohara O."/>
            <person name="Okazaki Y."/>
            <person name="Orlando V."/>
            <person name="Pang K.C."/>
            <person name="Pavan W.J."/>
            <person name="Pavesi G."/>
            <person name="Pesole G."/>
            <person name="Petrovsky N."/>
            <person name="Piazza S."/>
            <person name="Reed J."/>
            <person name="Reid J.F."/>
            <person name="Ring B.Z."/>
            <person name="Ringwald M."/>
            <person name="Rost B."/>
            <person name="Ruan Y."/>
            <person name="Salzberg S.L."/>
            <person name="Sandelin A."/>
            <person name="Schneider C."/>
            <person name="Schoenbach C."/>
            <person name="Sekiguchi K."/>
            <person name="Semple C.A."/>
            <person name="Seno S."/>
            <person name="Sessa L."/>
            <person name="Sheng Y."/>
            <person name="Shibata Y."/>
            <person name="Shimada H."/>
            <person name="Shimada K."/>
            <person name="Silva D."/>
            <person name="Sinclair B."/>
            <person name="Sperling S."/>
            <person name="Stupka E."/>
            <person name="Sugiura K."/>
            <person name="Sultana R."/>
            <person name="Takenaka Y."/>
            <person name="Taki K."/>
            <person name="Tammoja K."/>
            <person name="Tan S.L."/>
            <person name="Tang S."/>
            <person name="Taylor M.S."/>
            <person name="Tegner J."/>
            <person name="Teichmann S.A."/>
            <person name="Ueda H.R."/>
            <person name="van Nimwegen E."/>
            <person name="Verardo R."/>
            <person name="Wei C.L."/>
            <person name="Yagi K."/>
            <person name="Yamanishi H."/>
            <person name="Zabarovsky E."/>
            <person name="Zhu S."/>
            <person name="Zimmer A."/>
            <person name="Hide W."/>
            <person name="Bult C."/>
            <person name="Grimmond S.M."/>
            <person name="Teasdale R.D."/>
            <person name="Liu E.T."/>
            <person name="Brusic V."/>
            <person name="Quackenbush J."/>
            <person name="Wahlestedt C."/>
            <person name="Mattick J.S."/>
            <person name="Hume D.A."/>
            <person name="Kai C."/>
            <person name="Sasaki D."/>
            <person name="Tomaru Y."/>
            <person name="Fukuda S."/>
            <person name="Kanamori-Katayama M."/>
            <person name="Suzuki M."/>
            <person name="Aoki J."/>
            <person name="Arakawa T."/>
            <person name="Iida J."/>
            <person name="Imamura K."/>
            <person name="Itoh M."/>
            <person name="Kato T."/>
            <person name="Kawaji H."/>
            <person name="Kawagashira N."/>
            <person name="Kawashima T."/>
            <person name="Kojima M."/>
            <person name="Kondo S."/>
            <person name="Konno H."/>
            <person name="Nakano K."/>
            <person name="Ninomiya N."/>
            <person name="Nishio T."/>
            <person name="Okada M."/>
            <person name="Plessy C."/>
            <person name="Shibata K."/>
            <person name="Shiraki T."/>
            <person name="Suzuki S."/>
            <person name="Tagami M."/>
            <person name="Waki K."/>
            <person name="Watahiki A."/>
            <person name="Okamura-Oho Y."/>
            <person name="Suzuki H."/>
            <person name="Kawai J."/>
            <person name="Hayashizaki Y."/>
        </authorList>
    </citation>
    <scope>NUCLEOTIDE SEQUENCE [LARGE SCALE MRNA] (ISOFORM 1)</scope>
    <source>
        <strain>C57BL/6J</strain>
        <tissue>Bone marrow</tissue>
        <tissue>Colon</tissue>
    </source>
</reference>
<reference key="2">
    <citation type="journal article" date="2004" name="Genome Res.">
        <title>The status, quality, and expansion of the NIH full-length cDNA project: the Mammalian Gene Collection (MGC).</title>
        <authorList>
            <consortium name="The MGC Project Team"/>
        </authorList>
    </citation>
    <scope>NUCLEOTIDE SEQUENCE [LARGE SCALE MRNA] (ISOFORMS 1 AND 2)</scope>
    <source>
        <tissue>Liver</tissue>
        <tissue>Mammary tumor</tissue>
    </source>
</reference>
<reference key="3">
    <citation type="journal article" date="2007" name="Proc. Natl. Acad. Sci. U.S.A.">
        <title>Large-scale phosphorylation analysis of mouse liver.</title>
        <authorList>
            <person name="Villen J."/>
            <person name="Beausoleil S.A."/>
            <person name="Gerber S.A."/>
            <person name="Gygi S.P."/>
        </authorList>
    </citation>
    <scope>PHOSPHORYLATION [LARGE SCALE ANALYSIS] AT SER-73</scope>
    <scope>IDENTIFICATION BY MASS SPECTROMETRY [LARGE SCALE ANALYSIS]</scope>
    <source>
        <tissue>Liver</tissue>
    </source>
</reference>
<reference key="4">
    <citation type="journal article" date="2010" name="Cell">
        <title>A tissue-specific atlas of mouse protein phosphorylation and expression.</title>
        <authorList>
            <person name="Huttlin E.L."/>
            <person name="Jedrychowski M.P."/>
            <person name="Elias J.E."/>
            <person name="Goswami T."/>
            <person name="Rad R."/>
            <person name="Beausoleil S.A."/>
            <person name="Villen J."/>
            <person name="Haas W."/>
            <person name="Sowa M.E."/>
            <person name="Gygi S.P."/>
        </authorList>
    </citation>
    <scope>PHOSPHORYLATION [LARGE SCALE ANALYSIS] AT SER-73 AND SER-75</scope>
    <scope>IDENTIFICATION BY MASS SPECTROMETRY [LARGE SCALE ANALYSIS]</scope>
    <source>
        <tissue>Brain</tissue>
        <tissue>Brown adipose tissue</tissue>
        <tissue>Heart</tissue>
        <tissue>Kidney</tissue>
        <tissue>Liver</tissue>
        <tissue>Lung</tissue>
        <tissue>Spleen</tissue>
        <tissue>Testis</tissue>
    </source>
</reference>
<evidence type="ECO:0000250" key="1"/>
<evidence type="ECO:0000256" key="2">
    <source>
        <dbReference type="SAM" id="MobiDB-lite"/>
    </source>
</evidence>
<evidence type="ECO:0000303" key="3">
    <source>
    </source>
</evidence>
<evidence type="ECO:0007744" key="4">
    <source>
    </source>
</evidence>
<evidence type="ECO:0007744" key="5">
    <source>
    </source>
</evidence>
<dbReference type="EMBL" id="AK033540">
    <property type="protein sequence ID" value="BAC28348.1"/>
    <property type="molecule type" value="mRNA"/>
</dbReference>
<dbReference type="EMBL" id="AK152395">
    <property type="protein sequence ID" value="BAE31183.1"/>
    <property type="molecule type" value="mRNA"/>
</dbReference>
<dbReference type="EMBL" id="BC008545">
    <property type="protein sequence ID" value="AAH08545.1"/>
    <property type="molecule type" value="mRNA"/>
</dbReference>
<dbReference type="EMBL" id="BC037001">
    <property type="protein sequence ID" value="AAH37001.1"/>
    <property type="molecule type" value="mRNA"/>
</dbReference>
<dbReference type="CCDS" id="CCDS27115.1">
    <molecule id="Q91VU6-1"/>
</dbReference>
<dbReference type="RefSeq" id="NP_001185938.1">
    <molecule id="Q91VU6-1"/>
    <property type="nucleotide sequence ID" value="NM_001199009.1"/>
</dbReference>
<dbReference type="RefSeq" id="NP_598495.1">
    <molecule id="Q91VU6-1"/>
    <property type="nucleotide sequence ID" value="NM_133734.3"/>
</dbReference>
<dbReference type="RefSeq" id="XP_006519144.1">
    <molecule id="Q91VU6-1"/>
    <property type="nucleotide sequence ID" value="XM_006519081.5"/>
</dbReference>
<dbReference type="RefSeq" id="XP_006519146.1">
    <molecule id="Q91VU6-1"/>
    <property type="nucleotide sequence ID" value="XM_006519083.5"/>
</dbReference>
<dbReference type="RefSeq" id="XP_006519147.1">
    <molecule id="Q91VU6-1"/>
    <property type="nucleotide sequence ID" value="XM_006519084.5"/>
</dbReference>
<dbReference type="RefSeq" id="XP_006519148.1">
    <molecule id="Q91VU6-1"/>
    <property type="nucleotide sequence ID" value="XM_006519085.5"/>
</dbReference>
<dbReference type="RefSeq" id="XP_006519149.1">
    <molecule id="Q91VU6-1"/>
    <property type="nucleotide sequence ID" value="XM_006519086.5"/>
</dbReference>
<dbReference type="RefSeq" id="XP_006519150.1">
    <molecule id="Q91VU6-2"/>
    <property type="nucleotide sequence ID" value="XM_006519087.5"/>
</dbReference>
<dbReference type="RefSeq" id="XP_006519151.1">
    <molecule id="Q91VU6-2"/>
    <property type="nucleotide sequence ID" value="XM_006519088.5"/>
</dbReference>
<dbReference type="RefSeq" id="XP_006519152.1">
    <property type="nucleotide sequence ID" value="XM_006519089.2"/>
</dbReference>
<dbReference type="RefSeq" id="XP_006519153.1">
    <molecule id="Q91VU6-2"/>
    <property type="nucleotide sequence ID" value="XM_006519090.5"/>
</dbReference>
<dbReference type="RefSeq" id="XP_006519154.1">
    <molecule id="Q91VU6-2"/>
    <property type="nucleotide sequence ID" value="XM_006519091.5"/>
</dbReference>
<dbReference type="RefSeq" id="XP_030103706.1">
    <molecule id="Q91VU6-1"/>
    <property type="nucleotide sequence ID" value="XM_030247846.2"/>
</dbReference>
<dbReference type="RefSeq" id="XP_030103707.1">
    <molecule id="Q91VU6-1"/>
    <property type="nucleotide sequence ID" value="XM_030247847.2"/>
</dbReference>
<dbReference type="RefSeq" id="XP_030103708.1">
    <molecule id="Q91VU6-1"/>
    <property type="nucleotide sequence ID" value="XM_030247848.2"/>
</dbReference>
<dbReference type="RefSeq" id="XP_030103709.1">
    <molecule id="Q91VU6-2"/>
    <property type="nucleotide sequence ID" value="XM_030247849.2"/>
</dbReference>
<dbReference type="RefSeq" id="XP_030103710.1">
    <molecule id="Q91VU6-2"/>
    <property type="nucleotide sequence ID" value="XM_030247850.2"/>
</dbReference>
<dbReference type="SMR" id="Q91VU6"/>
<dbReference type="BioGRID" id="205826">
    <property type="interactions" value="5"/>
</dbReference>
<dbReference type="FunCoup" id="Q91VU6">
    <property type="interactions" value="1330"/>
</dbReference>
<dbReference type="STRING" id="10090.ENSMUSP00000114211"/>
<dbReference type="GlyGen" id="Q91VU6">
    <property type="glycosylation" value="2 sites"/>
</dbReference>
<dbReference type="iPTMnet" id="Q91VU6"/>
<dbReference type="PhosphoSitePlus" id="Q91VU6"/>
<dbReference type="SwissPalm" id="Q91VU6"/>
<dbReference type="jPOST" id="Q91VU6"/>
<dbReference type="PaxDb" id="10090-ENSMUSP00000072344"/>
<dbReference type="ProteomicsDB" id="277958">
    <molecule id="Q91VU6-1"/>
</dbReference>
<dbReference type="ProteomicsDB" id="277959">
    <molecule id="Q91VU6-2"/>
</dbReference>
<dbReference type="Pumba" id="Q91VU6"/>
<dbReference type="DNASU" id="28199"/>
<dbReference type="Ensembl" id="ENSMUST00000072530.11">
    <molecule id="Q91VU6-1"/>
    <property type="protein sequence ID" value="ENSMUSP00000072344.5"/>
    <property type="gene ID" value="ENSMUSG00000022214.16"/>
</dbReference>
<dbReference type="Ensembl" id="ENSMUST00000117236.8">
    <molecule id="Q91VU6-1"/>
    <property type="protein sequence ID" value="ENSMUSP00000113014.2"/>
    <property type="gene ID" value="ENSMUSG00000022214.16"/>
</dbReference>
<dbReference type="Ensembl" id="ENSMUST00000121622.8">
    <molecule id="Q91VU6-1"/>
    <property type="protein sequence ID" value="ENSMUSP00000113202.2"/>
    <property type="gene ID" value="ENSMUSG00000022214.16"/>
</dbReference>
<dbReference type="Ensembl" id="ENSMUST00000128490.9">
    <molecule id="Q91VU6-1"/>
    <property type="protein sequence ID" value="ENSMUSP00000114211.3"/>
    <property type="gene ID" value="ENSMUSG00000022214.16"/>
</dbReference>
<dbReference type="GeneID" id="28199"/>
<dbReference type="KEGG" id="mmu:28199"/>
<dbReference type="UCSC" id="uc007tyz.2">
    <molecule id="Q91VU6-1"/>
    <property type="organism name" value="mouse"/>
</dbReference>
<dbReference type="AGR" id="MGI:90168"/>
<dbReference type="CTD" id="80344"/>
<dbReference type="MGI" id="MGI:90168">
    <property type="gene designation" value="Dcaf11"/>
</dbReference>
<dbReference type="VEuPathDB" id="HostDB:ENSMUSG00000022214"/>
<dbReference type="eggNOG" id="KOG0266">
    <property type="taxonomic scope" value="Eukaryota"/>
</dbReference>
<dbReference type="GeneTree" id="ENSGT00720000108873"/>
<dbReference type="HOGENOM" id="CLU_014280_3_1_1"/>
<dbReference type="InParanoid" id="Q91VU6"/>
<dbReference type="OMA" id="EHTFPQM"/>
<dbReference type="OrthoDB" id="63070at2759"/>
<dbReference type="PhylomeDB" id="Q91VU6"/>
<dbReference type="TreeFam" id="TF314126"/>
<dbReference type="Reactome" id="R-MMU-8951664">
    <property type="pathway name" value="Neddylation"/>
</dbReference>
<dbReference type="UniPathway" id="UPA00143"/>
<dbReference type="BioGRID-ORCS" id="28199">
    <property type="hits" value="1 hit in 79 CRISPR screens"/>
</dbReference>
<dbReference type="ChiTaRS" id="Dcaf11">
    <property type="organism name" value="mouse"/>
</dbReference>
<dbReference type="PRO" id="PR:Q91VU6"/>
<dbReference type="Proteomes" id="UP000000589">
    <property type="component" value="Chromosome 14"/>
</dbReference>
<dbReference type="RNAct" id="Q91VU6">
    <property type="molecule type" value="protein"/>
</dbReference>
<dbReference type="Bgee" id="ENSMUSG00000022214">
    <property type="expression patterns" value="Expressed in left lobe of liver and 254 other cell types or tissues"/>
</dbReference>
<dbReference type="ExpressionAtlas" id="Q91VU6">
    <property type="expression patterns" value="baseline and differential"/>
</dbReference>
<dbReference type="GO" id="GO:0080008">
    <property type="term" value="C:Cul4-RING E3 ubiquitin ligase complex"/>
    <property type="evidence" value="ECO:0000250"/>
    <property type="project" value="UniProtKB"/>
</dbReference>
<dbReference type="GO" id="GO:0005654">
    <property type="term" value="C:nucleoplasm"/>
    <property type="evidence" value="ECO:0007669"/>
    <property type="project" value="Ensembl"/>
</dbReference>
<dbReference type="GO" id="GO:0050890">
    <property type="term" value="P:cognition"/>
    <property type="evidence" value="ECO:0000315"/>
    <property type="project" value="MGI"/>
</dbReference>
<dbReference type="GO" id="GO:0035640">
    <property type="term" value="P:exploration behavior"/>
    <property type="evidence" value="ECO:0000315"/>
    <property type="project" value="MGI"/>
</dbReference>
<dbReference type="GO" id="GO:0010467">
    <property type="term" value="P:gene expression"/>
    <property type="evidence" value="ECO:0000315"/>
    <property type="project" value="MGI"/>
</dbReference>
<dbReference type="GO" id="GO:0007613">
    <property type="term" value="P:memory"/>
    <property type="evidence" value="ECO:0000315"/>
    <property type="project" value="MGI"/>
</dbReference>
<dbReference type="GO" id="GO:0050821">
    <property type="term" value="P:protein stabilization"/>
    <property type="evidence" value="ECO:0000315"/>
    <property type="project" value="MGI"/>
</dbReference>
<dbReference type="GO" id="GO:0016567">
    <property type="term" value="P:protein ubiquitination"/>
    <property type="evidence" value="ECO:0007669"/>
    <property type="project" value="UniProtKB-UniPathway"/>
</dbReference>
<dbReference type="GO" id="GO:0003016">
    <property type="term" value="P:respiratory system process"/>
    <property type="evidence" value="ECO:0000315"/>
    <property type="project" value="MGI"/>
</dbReference>
<dbReference type="GO" id="GO:0006979">
    <property type="term" value="P:response to oxidative stress"/>
    <property type="evidence" value="ECO:0000315"/>
    <property type="project" value="MGI"/>
</dbReference>
<dbReference type="FunFam" id="2.130.10.10:FF:002187">
    <property type="entry name" value="DDB1 and CUL4 associated factor 11"/>
    <property type="match status" value="1"/>
</dbReference>
<dbReference type="FunFam" id="2.130.10.10:FF:000115">
    <property type="entry name" value="DDB1- and CUL4-associated factor 11 isoform X1"/>
    <property type="match status" value="1"/>
</dbReference>
<dbReference type="Gene3D" id="2.130.10.10">
    <property type="entry name" value="YVTN repeat-like/Quinoprotein amine dehydrogenase"/>
    <property type="match status" value="2"/>
</dbReference>
<dbReference type="InterPro" id="IPR051859">
    <property type="entry name" value="DCAF"/>
</dbReference>
<dbReference type="InterPro" id="IPR017399">
    <property type="entry name" value="DCAF11/LEC14B"/>
</dbReference>
<dbReference type="InterPro" id="IPR020472">
    <property type="entry name" value="G-protein_beta_WD-40_rep"/>
</dbReference>
<dbReference type="InterPro" id="IPR015943">
    <property type="entry name" value="WD40/YVTN_repeat-like_dom_sf"/>
</dbReference>
<dbReference type="InterPro" id="IPR036322">
    <property type="entry name" value="WD40_repeat_dom_sf"/>
</dbReference>
<dbReference type="InterPro" id="IPR001680">
    <property type="entry name" value="WD40_rpt"/>
</dbReference>
<dbReference type="PANTHER" id="PTHR19847">
    <property type="entry name" value="DDB1- AND CUL4-ASSOCIATED FACTOR 11"/>
    <property type="match status" value="1"/>
</dbReference>
<dbReference type="PANTHER" id="PTHR19847:SF7">
    <property type="entry name" value="DDB1- AND CUL4-ASSOCIATED FACTOR 11"/>
    <property type="match status" value="1"/>
</dbReference>
<dbReference type="Pfam" id="PF00400">
    <property type="entry name" value="WD40"/>
    <property type="match status" value="4"/>
</dbReference>
<dbReference type="PIRSF" id="PIRSF038135">
    <property type="entry name" value="WD_repeat_p23"/>
    <property type="match status" value="1"/>
</dbReference>
<dbReference type="PRINTS" id="PR00320">
    <property type="entry name" value="GPROTEINBRPT"/>
</dbReference>
<dbReference type="SMART" id="SM00320">
    <property type="entry name" value="WD40"/>
    <property type="match status" value="7"/>
</dbReference>
<dbReference type="SUPFAM" id="SSF50978">
    <property type="entry name" value="WD40 repeat-like"/>
    <property type="match status" value="1"/>
</dbReference>
<dbReference type="PROSITE" id="PS50082">
    <property type="entry name" value="WD_REPEATS_2"/>
    <property type="match status" value="3"/>
</dbReference>
<dbReference type="PROSITE" id="PS50294">
    <property type="entry name" value="WD_REPEATS_REGION"/>
    <property type="match status" value="1"/>
</dbReference>
<gene>
    <name type="primary">Dcaf11</name>
    <name type="synonym">D14Ucla1</name>
    <name type="synonym">Wdr23</name>
</gene>
<proteinExistence type="evidence at protein level"/>
<protein>
    <recommendedName>
        <fullName>DDB1- and CUL4-associated factor 11</fullName>
    </recommendedName>
    <alternativeName>
        <fullName>WD repeat-containing protein 23</fullName>
    </alternativeName>
</protein>
<comment type="function">
    <text evidence="1">May function as a substrate receptor for CUL4-DDB1 E3 ubiquitin-protein ligase complex.</text>
</comment>
<comment type="pathway">
    <text>Protein modification; protein ubiquitination.</text>
</comment>
<comment type="subunit">
    <text evidence="1">Interacts with DDB1 and CUL4A.</text>
</comment>
<comment type="alternative products">
    <event type="alternative splicing"/>
    <isoform>
        <id>Q91VU6-1</id>
        <name>1</name>
        <sequence type="displayed"/>
    </isoform>
    <isoform>
        <id>Q91VU6-2</id>
        <name>2</name>
        <sequence type="described" ref="VSP_008425 VSP_008426"/>
    </isoform>
</comment>
<accession>Q91VU6</accession>
<accession>Q3U836</accession>
<accession>Q8JZV8</accession>